<accession>Q5E330</accession>
<feature type="chain" id="PRO_0000152526" description="tRNA pseudouridine synthase D">
    <location>
        <begin position="1"/>
        <end position="351"/>
    </location>
</feature>
<feature type="domain" description="TRUD" evidence="1">
    <location>
        <begin position="158"/>
        <end position="304"/>
    </location>
</feature>
<feature type="active site" description="Nucleophile" evidence="1">
    <location>
        <position position="81"/>
    </location>
</feature>
<name>TRUD_ALIF1</name>
<gene>
    <name evidence="1" type="primary">truD</name>
    <name type="ordered locus">VF_2071</name>
</gene>
<proteinExistence type="inferred from homology"/>
<organism>
    <name type="scientific">Aliivibrio fischeri (strain ATCC 700601 / ES114)</name>
    <name type="common">Vibrio fischeri</name>
    <dbReference type="NCBI Taxonomy" id="312309"/>
    <lineage>
        <taxon>Bacteria</taxon>
        <taxon>Pseudomonadati</taxon>
        <taxon>Pseudomonadota</taxon>
        <taxon>Gammaproteobacteria</taxon>
        <taxon>Vibrionales</taxon>
        <taxon>Vibrionaceae</taxon>
        <taxon>Aliivibrio</taxon>
    </lineage>
</organism>
<evidence type="ECO:0000255" key="1">
    <source>
        <dbReference type="HAMAP-Rule" id="MF_01082"/>
    </source>
</evidence>
<comment type="function">
    <text evidence="1">Responsible for synthesis of pseudouridine from uracil-13 in transfer RNAs.</text>
</comment>
<comment type="catalytic activity">
    <reaction evidence="1">
        <text>uridine(13) in tRNA = pseudouridine(13) in tRNA</text>
        <dbReference type="Rhea" id="RHEA:42540"/>
        <dbReference type="Rhea" id="RHEA-COMP:10105"/>
        <dbReference type="Rhea" id="RHEA-COMP:10106"/>
        <dbReference type="ChEBI" id="CHEBI:65314"/>
        <dbReference type="ChEBI" id="CHEBI:65315"/>
        <dbReference type="EC" id="5.4.99.27"/>
    </reaction>
</comment>
<comment type="similarity">
    <text evidence="1">Belongs to the pseudouridine synthase TruD family.</text>
</comment>
<protein>
    <recommendedName>
        <fullName evidence="1">tRNA pseudouridine synthase D</fullName>
        <ecNumber evidence="1">5.4.99.27</ecNumber>
    </recommendedName>
    <alternativeName>
        <fullName evidence="1">tRNA pseudouridine(13) synthase</fullName>
    </alternativeName>
    <alternativeName>
        <fullName evidence="1">tRNA pseudouridylate synthase D</fullName>
    </alternativeName>
    <alternativeName>
        <fullName evidence="1">tRNA-uridine isomerase D</fullName>
    </alternativeName>
</protein>
<keyword id="KW-0413">Isomerase</keyword>
<keyword id="KW-1185">Reference proteome</keyword>
<keyword id="KW-0819">tRNA processing</keyword>
<sequence length="351" mass="39609">MSDIMSNFSWLYGKPVATGKLKQLPEHFIVKEILGFEFTGNGEHLMVKIRKTGENTKYVANELAKFCGVKSKNVSWAGLKDRHAVTEQWLSVQVANSDELNFAKFEATHPGVEILEVTRHNKKLRPGDLQGNQFQVIATEVTDIDDVLARLEKVKLAGVPNYFGSQRFGHEGNNVNEARRWGRDNVRTRDNSKRSFYLSAARSWIFNHIVSQRITEGYFSQPVDGDILLDRNDRIVNENVTSEESIQKIQNGELSITAALAGDNQLPTTGTALTLEQPHLDAEPDLMALIRGNRMRHERRAIELHPENLTWSAEGDTLTLNFSLTSGSFATVIVRELLQEIEVERTYSSND</sequence>
<reference key="1">
    <citation type="journal article" date="2005" name="Proc. Natl. Acad. Sci. U.S.A.">
        <title>Complete genome sequence of Vibrio fischeri: a symbiotic bacterium with pathogenic congeners.</title>
        <authorList>
            <person name="Ruby E.G."/>
            <person name="Urbanowski M."/>
            <person name="Campbell J."/>
            <person name="Dunn A."/>
            <person name="Faini M."/>
            <person name="Gunsalus R."/>
            <person name="Lostroh P."/>
            <person name="Lupp C."/>
            <person name="McCann J."/>
            <person name="Millikan D."/>
            <person name="Schaefer A."/>
            <person name="Stabb E."/>
            <person name="Stevens A."/>
            <person name="Visick K."/>
            <person name="Whistler C."/>
            <person name="Greenberg E.P."/>
        </authorList>
    </citation>
    <scope>NUCLEOTIDE SEQUENCE [LARGE SCALE GENOMIC DNA]</scope>
    <source>
        <strain>ATCC 700601 / ES114</strain>
    </source>
</reference>
<dbReference type="EC" id="5.4.99.27" evidence="1"/>
<dbReference type="EMBL" id="CP000020">
    <property type="protein sequence ID" value="AAW86566.1"/>
    <property type="molecule type" value="Genomic_DNA"/>
</dbReference>
<dbReference type="RefSeq" id="WP_011262538.1">
    <property type="nucleotide sequence ID" value="NC_006840.2"/>
</dbReference>
<dbReference type="RefSeq" id="YP_205454.1">
    <property type="nucleotide sequence ID" value="NC_006840.2"/>
</dbReference>
<dbReference type="SMR" id="Q5E330"/>
<dbReference type="STRING" id="312309.VF_2071"/>
<dbReference type="EnsemblBacteria" id="AAW86566">
    <property type="protein sequence ID" value="AAW86566"/>
    <property type="gene ID" value="VF_2071"/>
</dbReference>
<dbReference type="GeneID" id="54164777"/>
<dbReference type="KEGG" id="vfi:VF_2071"/>
<dbReference type="PATRIC" id="fig|312309.11.peg.2114"/>
<dbReference type="eggNOG" id="COG0585">
    <property type="taxonomic scope" value="Bacteria"/>
</dbReference>
<dbReference type="HOGENOM" id="CLU_005281_4_0_6"/>
<dbReference type="OrthoDB" id="1550679at2"/>
<dbReference type="Proteomes" id="UP000000537">
    <property type="component" value="Chromosome I"/>
</dbReference>
<dbReference type="GO" id="GO:0005829">
    <property type="term" value="C:cytosol"/>
    <property type="evidence" value="ECO:0007669"/>
    <property type="project" value="TreeGrafter"/>
</dbReference>
<dbReference type="GO" id="GO:0003723">
    <property type="term" value="F:RNA binding"/>
    <property type="evidence" value="ECO:0007669"/>
    <property type="project" value="InterPro"/>
</dbReference>
<dbReference type="GO" id="GO:0160150">
    <property type="term" value="F:tRNA pseudouridine(13) synthase activity"/>
    <property type="evidence" value="ECO:0007669"/>
    <property type="project" value="UniProtKB-EC"/>
</dbReference>
<dbReference type="GO" id="GO:0031119">
    <property type="term" value="P:tRNA pseudouridine synthesis"/>
    <property type="evidence" value="ECO:0007669"/>
    <property type="project" value="UniProtKB-UniRule"/>
</dbReference>
<dbReference type="CDD" id="cd02575">
    <property type="entry name" value="PseudoU_synth_EcTruD"/>
    <property type="match status" value="1"/>
</dbReference>
<dbReference type="Gene3D" id="3.30.2350.20">
    <property type="entry name" value="TruD, catalytic domain"/>
    <property type="match status" value="1"/>
</dbReference>
<dbReference type="Gene3D" id="3.30.2340.10">
    <property type="entry name" value="TruD, insertion domain"/>
    <property type="match status" value="1"/>
</dbReference>
<dbReference type="HAMAP" id="MF_01082">
    <property type="entry name" value="TruD"/>
    <property type="match status" value="1"/>
</dbReference>
<dbReference type="InterPro" id="IPR020103">
    <property type="entry name" value="PsdUridine_synth_cat_dom_sf"/>
</dbReference>
<dbReference type="InterPro" id="IPR001656">
    <property type="entry name" value="PsdUridine_synth_TruD"/>
</dbReference>
<dbReference type="InterPro" id="IPR020119">
    <property type="entry name" value="PsdUridine_synth_TruD_CS"/>
</dbReference>
<dbReference type="InterPro" id="IPR011760">
    <property type="entry name" value="PsdUridine_synth_TruD_insert"/>
</dbReference>
<dbReference type="InterPro" id="IPR042214">
    <property type="entry name" value="TruD_catalytic"/>
</dbReference>
<dbReference type="InterPro" id="IPR043165">
    <property type="entry name" value="TruD_insert_sf"/>
</dbReference>
<dbReference type="InterPro" id="IPR050170">
    <property type="entry name" value="TruD_pseudoU_synthase"/>
</dbReference>
<dbReference type="NCBIfam" id="NF002155">
    <property type="entry name" value="PRK00984.1-4"/>
    <property type="match status" value="1"/>
</dbReference>
<dbReference type="PANTHER" id="PTHR47811">
    <property type="entry name" value="TRNA PSEUDOURIDINE SYNTHASE D"/>
    <property type="match status" value="1"/>
</dbReference>
<dbReference type="PANTHER" id="PTHR47811:SF1">
    <property type="entry name" value="TRNA PSEUDOURIDINE SYNTHASE D"/>
    <property type="match status" value="1"/>
</dbReference>
<dbReference type="Pfam" id="PF01142">
    <property type="entry name" value="TruD"/>
    <property type="match status" value="2"/>
</dbReference>
<dbReference type="SUPFAM" id="SSF55120">
    <property type="entry name" value="Pseudouridine synthase"/>
    <property type="match status" value="1"/>
</dbReference>
<dbReference type="PROSITE" id="PS50984">
    <property type="entry name" value="TRUD"/>
    <property type="match status" value="1"/>
</dbReference>
<dbReference type="PROSITE" id="PS01268">
    <property type="entry name" value="UPF0024"/>
    <property type="match status" value="1"/>
</dbReference>